<organism>
    <name type="scientific">Methanopyrus kandleri (strain AV19 / DSM 6324 / JCM 9639 / NBRC 100938)</name>
    <dbReference type="NCBI Taxonomy" id="190192"/>
    <lineage>
        <taxon>Archaea</taxon>
        <taxon>Methanobacteriati</taxon>
        <taxon>Methanobacteriota</taxon>
        <taxon>Methanomada group</taxon>
        <taxon>Methanopyri</taxon>
        <taxon>Methanopyrales</taxon>
        <taxon>Methanopyraceae</taxon>
        <taxon>Methanopyrus</taxon>
    </lineage>
</organism>
<keyword id="KW-0028">Amino-acid biosynthesis</keyword>
<keyword id="KW-0057">Aromatic amino acid biosynthesis</keyword>
<keyword id="KW-0456">Lyase</keyword>
<keyword id="KW-1185">Reference proteome</keyword>
<keyword id="KW-0822">Tryptophan biosynthesis</keyword>
<dbReference type="EC" id="4.2.1.20" evidence="1"/>
<dbReference type="EMBL" id="AE009439">
    <property type="protein sequence ID" value="AAM01618.1"/>
    <property type="molecule type" value="Genomic_DNA"/>
</dbReference>
<dbReference type="SMR" id="Q8TYA2"/>
<dbReference type="FunCoup" id="Q8TYA2">
    <property type="interactions" value="83"/>
</dbReference>
<dbReference type="STRING" id="190192.MK0403"/>
<dbReference type="PaxDb" id="190192-MK0403"/>
<dbReference type="EnsemblBacteria" id="AAM01618">
    <property type="protein sequence ID" value="AAM01618"/>
    <property type="gene ID" value="MK0403"/>
</dbReference>
<dbReference type="KEGG" id="mka:MK0403"/>
<dbReference type="PATRIC" id="fig|190192.8.peg.430"/>
<dbReference type="HOGENOM" id="CLU_016734_0_4_2"/>
<dbReference type="InParanoid" id="Q8TYA2"/>
<dbReference type="UniPathway" id="UPA00035">
    <property type="reaction ID" value="UER00044"/>
</dbReference>
<dbReference type="Proteomes" id="UP000001826">
    <property type="component" value="Chromosome"/>
</dbReference>
<dbReference type="GO" id="GO:0005829">
    <property type="term" value="C:cytosol"/>
    <property type="evidence" value="ECO:0007669"/>
    <property type="project" value="TreeGrafter"/>
</dbReference>
<dbReference type="GO" id="GO:0004834">
    <property type="term" value="F:tryptophan synthase activity"/>
    <property type="evidence" value="ECO:0007669"/>
    <property type="project" value="UniProtKB-UniRule"/>
</dbReference>
<dbReference type="CDD" id="cd04724">
    <property type="entry name" value="Tryptophan_synthase_alpha"/>
    <property type="match status" value="1"/>
</dbReference>
<dbReference type="FunFam" id="3.20.20.70:FF:000037">
    <property type="entry name" value="Tryptophan synthase alpha chain"/>
    <property type="match status" value="1"/>
</dbReference>
<dbReference type="Gene3D" id="3.20.20.70">
    <property type="entry name" value="Aldolase class I"/>
    <property type="match status" value="1"/>
</dbReference>
<dbReference type="HAMAP" id="MF_00131">
    <property type="entry name" value="Trp_synth_alpha"/>
    <property type="match status" value="1"/>
</dbReference>
<dbReference type="InterPro" id="IPR013785">
    <property type="entry name" value="Aldolase_TIM"/>
</dbReference>
<dbReference type="InterPro" id="IPR011060">
    <property type="entry name" value="RibuloseP-bd_barrel"/>
</dbReference>
<dbReference type="InterPro" id="IPR018204">
    <property type="entry name" value="Trp_synthase_alpha_AS"/>
</dbReference>
<dbReference type="InterPro" id="IPR002028">
    <property type="entry name" value="Trp_synthase_suA"/>
</dbReference>
<dbReference type="NCBIfam" id="TIGR00262">
    <property type="entry name" value="trpA"/>
    <property type="match status" value="1"/>
</dbReference>
<dbReference type="PANTHER" id="PTHR43406:SF1">
    <property type="entry name" value="TRYPTOPHAN SYNTHASE ALPHA CHAIN, CHLOROPLASTIC"/>
    <property type="match status" value="1"/>
</dbReference>
<dbReference type="PANTHER" id="PTHR43406">
    <property type="entry name" value="TRYPTOPHAN SYNTHASE, ALPHA CHAIN"/>
    <property type="match status" value="1"/>
</dbReference>
<dbReference type="Pfam" id="PF00290">
    <property type="entry name" value="Trp_syntA"/>
    <property type="match status" value="1"/>
</dbReference>
<dbReference type="SUPFAM" id="SSF51366">
    <property type="entry name" value="Ribulose-phoshate binding barrel"/>
    <property type="match status" value="1"/>
</dbReference>
<dbReference type="PROSITE" id="PS00167">
    <property type="entry name" value="TRP_SYNTHASE_ALPHA"/>
    <property type="match status" value="1"/>
</dbReference>
<gene>
    <name evidence="1" type="primary">trpA</name>
    <name type="ordered locus">MK0403</name>
</gene>
<accession>Q8TYA2</accession>
<evidence type="ECO:0000255" key="1">
    <source>
        <dbReference type="HAMAP-Rule" id="MF_00131"/>
    </source>
</evidence>
<feature type="chain" id="PRO_0000098890" description="Tryptophan synthase alpha chain">
    <location>
        <begin position="1"/>
        <end position="275"/>
    </location>
</feature>
<feature type="active site" description="Proton acceptor" evidence="1">
    <location>
        <position position="51"/>
    </location>
</feature>
<feature type="active site" description="Proton acceptor" evidence="1">
    <location>
        <position position="62"/>
    </location>
</feature>
<name>TRPA_METKA</name>
<reference key="1">
    <citation type="journal article" date="2002" name="Proc. Natl. Acad. Sci. U.S.A.">
        <title>The complete genome of hyperthermophile Methanopyrus kandleri AV19 and monophyly of archaeal methanogens.</title>
        <authorList>
            <person name="Slesarev A.I."/>
            <person name="Mezhevaya K.V."/>
            <person name="Makarova K.S."/>
            <person name="Polushin N.N."/>
            <person name="Shcherbinina O.V."/>
            <person name="Shakhova V.V."/>
            <person name="Belova G.I."/>
            <person name="Aravind L."/>
            <person name="Natale D.A."/>
            <person name="Rogozin I.B."/>
            <person name="Tatusov R.L."/>
            <person name="Wolf Y.I."/>
            <person name="Stetter K.O."/>
            <person name="Malykh A.G."/>
            <person name="Koonin E.V."/>
            <person name="Kozyavkin S.A."/>
        </authorList>
    </citation>
    <scope>NUCLEOTIDE SEQUENCE [LARGE SCALE GENOMIC DNA]</scope>
    <source>
        <strain>AV19 / DSM 6324 / JCM 9639 / NBRC 100938</strain>
    </source>
</reference>
<comment type="function">
    <text>The alpha subunit is responsible for the aldol cleavage of indoleglycerol phosphate to indole and glyceraldehyde 3-phosphate.</text>
</comment>
<comment type="catalytic activity">
    <reaction evidence="1">
        <text>(1S,2R)-1-C-(indol-3-yl)glycerol 3-phosphate + L-serine = D-glyceraldehyde 3-phosphate + L-tryptophan + H2O</text>
        <dbReference type="Rhea" id="RHEA:10532"/>
        <dbReference type="ChEBI" id="CHEBI:15377"/>
        <dbReference type="ChEBI" id="CHEBI:33384"/>
        <dbReference type="ChEBI" id="CHEBI:57912"/>
        <dbReference type="ChEBI" id="CHEBI:58866"/>
        <dbReference type="ChEBI" id="CHEBI:59776"/>
        <dbReference type="EC" id="4.2.1.20"/>
    </reaction>
</comment>
<comment type="pathway">
    <text evidence="1">Amino-acid biosynthesis; L-tryptophan biosynthesis; L-tryptophan from chorismate: step 5/5.</text>
</comment>
<comment type="subunit">
    <text evidence="1">Tetramer of two alpha and two beta chains.</text>
</comment>
<comment type="similarity">
    <text evidence="1">Belongs to the TrpA family.</text>
</comment>
<protein>
    <recommendedName>
        <fullName evidence="1">Tryptophan synthase alpha chain</fullName>
        <ecNumber evidence="1">4.2.1.20</ecNumber>
    </recommendedName>
</protein>
<proteinExistence type="inferred from homology"/>
<sequence>MSGLVLERIFEEAEGEGRGALIGYLTCGHPGLEETVSLARALRDGGVDILELGVPFSEPIADGPTIQKAVDEALRAGTTPWDCLEVAEEVSEFVPVVLLCYYNTLHANGFERYLSAAAEAGVSGIIVADMPVEESDEVHSVARDLEIDVIYLVAPSTTDERLKKIGERASGFVYVISRYGVTGARRDLSEDTLELVRWVRDHVDVPVAVGFGISERWHVEEVIAAGADGAIVGSAFIKEIHRSEDIAEAEERVRELAKELVEGARDGYRRRSSSE</sequence>